<organism>
    <name type="scientific">Agrobacterium fabrum (strain C58 / ATCC 33970)</name>
    <name type="common">Agrobacterium tumefaciens (strain C58)</name>
    <dbReference type="NCBI Taxonomy" id="176299"/>
    <lineage>
        <taxon>Bacteria</taxon>
        <taxon>Pseudomonadati</taxon>
        <taxon>Pseudomonadota</taxon>
        <taxon>Alphaproteobacteria</taxon>
        <taxon>Hyphomicrobiales</taxon>
        <taxon>Rhizobiaceae</taxon>
        <taxon>Rhizobium/Agrobacterium group</taxon>
        <taxon>Agrobacterium</taxon>
        <taxon>Agrobacterium tumefaciens complex</taxon>
    </lineage>
</organism>
<accession>Q8U8J3</accession>
<proteinExistence type="inferred from homology"/>
<feature type="chain" id="PRO_0000155779" description="Quinolinate synthase">
    <location>
        <begin position="1"/>
        <end position="345"/>
    </location>
</feature>
<feature type="binding site" evidence="1">
    <location>
        <position position="69"/>
    </location>
    <ligand>
        <name>iminosuccinate</name>
        <dbReference type="ChEBI" id="CHEBI:77875"/>
    </ligand>
</feature>
<feature type="binding site" evidence="1">
    <location>
        <position position="87"/>
    </location>
    <ligand>
        <name>iminosuccinate</name>
        <dbReference type="ChEBI" id="CHEBI:77875"/>
    </ligand>
</feature>
<feature type="binding site" evidence="1">
    <location>
        <position position="132"/>
    </location>
    <ligand>
        <name>[4Fe-4S] cluster</name>
        <dbReference type="ChEBI" id="CHEBI:49883"/>
    </ligand>
</feature>
<feature type="binding site" evidence="1">
    <location>
        <begin position="158"/>
        <end position="160"/>
    </location>
    <ligand>
        <name>iminosuccinate</name>
        <dbReference type="ChEBI" id="CHEBI:77875"/>
    </ligand>
</feature>
<feature type="binding site" evidence="1">
    <location>
        <position position="175"/>
    </location>
    <ligand>
        <name>iminosuccinate</name>
        <dbReference type="ChEBI" id="CHEBI:77875"/>
    </ligand>
</feature>
<feature type="binding site" evidence="1">
    <location>
        <position position="217"/>
    </location>
    <ligand>
        <name>[4Fe-4S] cluster</name>
        <dbReference type="ChEBI" id="CHEBI:49883"/>
    </ligand>
</feature>
<feature type="binding site" evidence="1">
    <location>
        <begin position="243"/>
        <end position="245"/>
    </location>
    <ligand>
        <name>iminosuccinate</name>
        <dbReference type="ChEBI" id="CHEBI:77875"/>
    </ligand>
</feature>
<feature type="binding site" evidence="1">
    <location>
        <position position="260"/>
    </location>
    <ligand>
        <name>iminosuccinate</name>
        <dbReference type="ChEBI" id="CHEBI:77875"/>
    </ligand>
</feature>
<feature type="binding site" evidence="1">
    <location>
        <position position="303"/>
    </location>
    <ligand>
        <name>[4Fe-4S] cluster</name>
        <dbReference type="ChEBI" id="CHEBI:49883"/>
    </ligand>
</feature>
<protein>
    <recommendedName>
        <fullName evidence="1">Quinolinate synthase</fullName>
        <ecNumber evidence="1">2.5.1.72</ecNumber>
    </recommendedName>
</protein>
<keyword id="KW-0004">4Fe-4S</keyword>
<keyword id="KW-0963">Cytoplasm</keyword>
<keyword id="KW-0408">Iron</keyword>
<keyword id="KW-0411">Iron-sulfur</keyword>
<keyword id="KW-0479">Metal-binding</keyword>
<keyword id="KW-0662">Pyridine nucleotide biosynthesis</keyword>
<keyword id="KW-1185">Reference proteome</keyword>
<keyword id="KW-0808">Transferase</keyword>
<gene>
    <name evidence="1" type="primary">nadA</name>
    <name type="ordered locus">Atu4098</name>
    <name type="ORF">AGR_L_1511</name>
</gene>
<sequence>MLTMRICLRATYTQKEYKWESTVNEQISAASLYDRVARVIPKAEWMGFQDDVEAILELKRKRNAVILAHNYQTPEIFHGVADIVGDSLALARKAMEVEADVIVLAGVHFMAETAKLLNPEKTVLIPDMAAGCSLADSITPEDIALLRKAYPGVPVVTYVNTSAAVKAASDICCTSGNARQVVESLGVPRVLMLPDEYLAKNVAKETSVELIAWRGHCEVHELFTADDIRELRESHPGVIVLAHPECPPEVVDAADFSGSTAVMSDYVGRERPARVVLLTECSMSDNVAVHHPDVEFIRPCNLCPHMKRITLGNIRTALEENRHEVTVDPAIAGAARRAVERMLQI</sequence>
<dbReference type="EC" id="2.5.1.72" evidence="1"/>
<dbReference type="EMBL" id="AE007870">
    <property type="protein sequence ID" value="AAK89333.1"/>
    <property type="molecule type" value="Genomic_DNA"/>
</dbReference>
<dbReference type="PIR" id="AE3060">
    <property type="entry name" value="AE3060"/>
</dbReference>
<dbReference type="PIR" id="C98226">
    <property type="entry name" value="C98226"/>
</dbReference>
<dbReference type="RefSeq" id="NP_356548.1">
    <property type="nucleotide sequence ID" value="NC_003063.2"/>
</dbReference>
<dbReference type="SMR" id="Q8U8J3"/>
<dbReference type="STRING" id="176299.Atu4098"/>
<dbReference type="EnsemblBacteria" id="AAK89333">
    <property type="protein sequence ID" value="AAK89333"/>
    <property type="gene ID" value="Atu4098"/>
</dbReference>
<dbReference type="KEGG" id="atu:Atu4098"/>
<dbReference type="PATRIC" id="fig|176299.10.peg.3916"/>
<dbReference type="eggNOG" id="COG0379">
    <property type="taxonomic scope" value="Bacteria"/>
</dbReference>
<dbReference type="HOGENOM" id="CLU_047382_0_0_5"/>
<dbReference type="OrthoDB" id="9801204at2"/>
<dbReference type="PhylomeDB" id="Q8U8J3"/>
<dbReference type="BioCyc" id="AGRO:ATU4098-MONOMER"/>
<dbReference type="UniPathway" id="UPA00253">
    <property type="reaction ID" value="UER00327"/>
</dbReference>
<dbReference type="Proteomes" id="UP000000813">
    <property type="component" value="Chromosome linear"/>
</dbReference>
<dbReference type="GO" id="GO:0005829">
    <property type="term" value="C:cytosol"/>
    <property type="evidence" value="ECO:0007669"/>
    <property type="project" value="TreeGrafter"/>
</dbReference>
<dbReference type="GO" id="GO:0051539">
    <property type="term" value="F:4 iron, 4 sulfur cluster binding"/>
    <property type="evidence" value="ECO:0007669"/>
    <property type="project" value="UniProtKB-KW"/>
</dbReference>
<dbReference type="GO" id="GO:0046872">
    <property type="term" value="F:metal ion binding"/>
    <property type="evidence" value="ECO:0007669"/>
    <property type="project" value="UniProtKB-KW"/>
</dbReference>
<dbReference type="GO" id="GO:0008987">
    <property type="term" value="F:quinolinate synthetase A activity"/>
    <property type="evidence" value="ECO:0007669"/>
    <property type="project" value="UniProtKB-UniRule"/>
</dbReference>
<dbReference type="GO" id="GO:0034628">
    <property type="term" value="P:'de novo' NAD biosynthetic process from L-aspartate"/>
    <property type="evidence" value="ECO:0007669"/>
    <property type="project" value="TreeGrafter"/>
</dbReference>
<dbReference type="Gene3D" id="3.40.50.10800">
    <property type="entry name" value="NadA-like"/>
    <property type="match status" value="3"/>
</dbReference>
<dbReference type="HAMAP" id="MF_00568">
    <property type="entry name" value="NadA_type2"/>
    <property type="match status" value="1"/>
</dbReference>
<dbReference type="InterPro" id="IPR003473">
    <property type="entry name" value="NadA"/>
</dbReference>
<dbReference type="InterPro" id="IPR036094">
    <property type="entry name" value="NadA_sf"/>
</dbReference>
<dbReference type="InterPro" id="IPR023066">
    <property type="entry name" value="Quinolinate_synth_type2"/>
</dbReference>
<dbReference type="NCBIfam" id="TIGR00550">
    <property type="entry name" value="nadA"/>
    <property type="match status" value="1"/>
</dbReference>
<dbReference type="NCBIfam" id="NF006878">
    <property type="entry name" value="PRK09375.1-2"/>
    <property type="match status" value="1"/>
</dbReference>
<dbReference type="NCBIfam" id="NF006879">
    <property type="entry name" value="PRK09375.1-4"/>
    <property type="match status" value="1"/>
</dbReference>
<dbReference type="PANTHER" id="PTHR30573:SF0">
    <property type="entry name" value="QUINOLINATE SYNTHASE, CHLOROPLASTIC"/>
    <property type="match status" value="1"/>
</dbReference>
<dbReference type="PANTHER" id="PTHR30573">
    <property type="entry name" value="QUINOLINATE SYNTHETASE A"/>
    <property type="match status" value="1"/>
</dbReference>
<dbReference type="Pfam" id="PF02445">
    <property type="entry name" value="NadA"/>
    <property type="match status" value="1"/>
</dbReference>
<dbReference type="SUPFAM" id="SSF142754">
    <property type="entry name" value="NadA-like"/>
    <property type="match status" value="1"/>
</dbReference>
<reference key="1">
    <citation type="journal article" date="2001" name="Science">
        <title>The genome of the natural genetic engineer Agrobacterium tumefaciens C58.</title>
        <authorList>
            <person name="Wood D.W."/>
            <person name="Setubal J.C."/>
            <person name="Kaul R."/>
            <person name="Monks D.E."/>
            <person name="Kitajima J.P."/>
            <person name="Okura V.K."/>
            <person name="Zhou Y."/>
            <person name="Chen L."/>
            <person name="Wood G.E."/>
            <person name="Almeida N.F. Jr."/>
            <person name="Woo L."/>
            <person name="Chen Y."/>
            <person name="Paulsen I.T."/>
            <person name="Eisen J.A."/>
            <person name="Karp P.D."/>
            <person name="Bovee D. Sr."/>
            <person name="Chapman P."/>
            <person name="Clendenning J."/>
            <person name="Deatherage G."/>
            <person name="Gillet W."/>
            <person name="Grant C."/>
            <person name="Kutyavin T."/>
            <person name="Levy R."/>
            <person name="Li M.-J."/>
            <person name="McClelland E."/>
            <person name="Palmieri A."/>
            <person name="Raymond C."/>
            <person name="Rouse G."/>
            <person name="Saenphimmachak C."/>
            <person name="Wu Z."/>
            <person name="Romero P."/>
            <person name="Gordon D."/>
            <person name="Zhang S."/>
            <person name="Yoo H."/>
            <person name="Tao Y."/>
            <person name="Biddle P."/>
            <person name="Jung M."/>
            <person name="Krespan W."/>
            <person name="Perry M."/>
            <person name="Gordon-Kamm B."/>
            <person name="Liao L."/>
            <person name="Kim S."/>
            <person name="Hendrick C."/>
            <person name="Zhao Z.-Y."/>
            <person name="Dolan M."/>
            <person name="Chumley F."/>
            <person name="Tingey S.V."/>
            <person name="Tomb J.-F."/>
            <person name="Gordon M.P."/>
            <person name="Olson M.V."/>
            <person name="Nester E.W."/>
        </authorList>
    </citation>
    <scope>NUCLEOTIDE SEQUENCE [LARGE SCALE GENOMIC DNA]</scope>
    <source>
        <strain>C58 / ATCC 33970</strain>
    </source>
</reference>
<reference key="2">
    <citation type="journal article" date="2001" name="Science">
        <title>Genome sequence of the plant pathogen and biotechnology agent Agrobacterium tumefaciens C58.</title>
        <authorList>
            <person name="Goodner B."/>
            <person name="Hinkle G."/>
            <person name="Gattung S."/>
            <person name="Miller N."/>
            <person name="Blanchard M."/>
            <person name="Qurollo B."/>
            <person name="Goldman B.S."/>
            <person name="Cao Y."/>
            <person name="Askenazi M."/>
            <person name="Halling C."/>
            <person name="Mullin L."/>
            <person name="Houmiel K."/>
            <person name="Gordon J."/>
            <person name="Vaudin M."/>
            <person name="Iartchouk O."/>
            <person name="Epp A."/>
            <person name="Liu F."/>
            <person name="Wollam C."/>
            <person name="Allinger M."/>
            <person name="Doughty D."/>
            <person name="Scott C."/>
            <person name="Lappas C."/>
            <person name="Markelz B."/>
            <person name="Flanagan C."/>
            <person name="Crowell C."/>
            <person name="Gurson J."/>
            <person name="Lomo C."/>
            <person name="Sear C."/>
            <person name="Strub G."/>
            <person name="Cielo C."/>
            <person name="Slater S."/>
        </authorList>
    </citation>
    <scope>NUCLEOTIDE SEQUENCE [LARGE SCALE GENOMIC DNA]</scope>
    <source>
        <strain>C58 / ATCC 33970</strain>
    </source>
</reference>
<evidence type="ECO:0000255" key="1">
    <source>
        <dbReference type="HAMAP-Rule" id="MF_00568"/>
    </source>
</evidence>
<comment type="function">
    <text evidence="1">Catalyzes the condensation of iminoaspartate with dihydroxyacetone phosphate to form quinolinate.</text>
</comment>
<comment type="catalytic activity">
    <reaction evidence="1">
        <text>iminosuccinate + dihydroxyacetone phosphate = quinolinate + phosphate + 2 H2O + H(+)</text>
        <dbReference type="Rhea" id="RHEA:25888"/>
        <dbReference type="ChEBI" id="CHEBI:15377"/>
        <dbReference type="ChEBI" id="CHEBI:15378"/>
        <dbReference type="ChEBI" id="CHEBI:29959"/>
        <dbReference type="ChEBI" id="CHEBI:43474"/>
        <dbReference type="ChEBI" id="CHEBI:57642"/>
        <dbReference type="ChEBI" id="CHEBI:77875"/>
        <dbReference type="EC" id="2.5.1.72"/>
    </reaction>
    <physiologicalReaction direction="left-to-right" evidence="1">
        <dbReference type="Rhea" id="RHEA:25889"/>
    </physiologicalReaction>
</comment>
<comment type="cofactor">
    <cofactor evidence="1">
        <name>[4Fe-4S] cluster</name>
        <dbReference type="ChEBI" id="CHEBI:49883"/>
    </cofactor>
    <text evidence="1">Binds 1 [4Fe-4S] cluster per subunit.</text>
</comment>
<comment type="pathway">
    <text evidence="1">Cofactor biosynthesis; NAD(+) biosynthesis; quinolinate from iminoaspartate: step 1/1.</text>
</comment>
<comment type="subcellular location">
    <subcellularLocation>
        <location evidence="1">Cytoplasm</location>
    </subcellularLocation>
</comment>
<comment type="similarity">
    <text evidence="1">Belongs to the quinolinate synthase family. Type 2 subfamily.</text>
</comment>
<name>NADA_AGRFC</name>